<gene>
    <name type="primary">TIR1</name>
    <name type="synonym">FBL1</name>
    <name type="synonym">WEI1</name>
    <name type="ordered locus">At3g62980</name>
    <name type="ORF">T20O10.80</name>
</gene>
<sequence length="594" mass="66799">MQKRIALSFPEEVLEHVFSFIQLDKDRNSVSLVCKSWYEIERWCRRKVFIGNCYAVSPATVIRRFPKVRSVELKGKPHFADFNLVPDGWGGYVYPWIEAMSSSYTWLEEIRLKRMVVTDDCLELIAKSFKNFKVLVLSSCEGFSTDGLAAIAATCRNLKELDLRESDVDDVSGHWLSHFPDTYTSLVSLNISCLASEVSFSALERLVTRCPNLKSLKLNRAVPLEKLATLLQRAPQLEELGTGGYTAEVRPDVYSGLSVALSGCKELRCLSGFWDAVPAYLPAVYSVCSRLTTLNLSYATVQSYDLVKLLCQCPKLQRLWVLDYIEDAGLEVLASTCKDLRELRVFPSEPFVMEPNVALTEQGLVSVSMGCPKLESVLYFCRQMTNAALITIARNRPNMTRFRLCIIEPKAPDYLTLEPLDIGFGAIVEHCKDLRRLSLSGLLTDKVFEYIGTYAKKMEMLSVAFAGDSDLGMHHVLSGCDSLRKLEIRDCPFGDKALLANASKLETMRSLWMSSCSVSFGACKLLGQKMPKLNVEVIDERGAPDSRPESCPVERVFIYRTVAGPRFDMPGFVWNMDQDSTMRFSRQIITTNGL</sequence>
<accession>Q570C0</accession>
<accession>A5YZP2</accession>
<accession>B2CVU0</accession>
<accession>O24660</accession>
<dbReference type="EMBL" id="AF005047">
    <property type="protein sequence ID" value="AAB69175.1"/>
    <property type="molecule type" value="Genomic_DNA"/>
</dbReference>
<dbReference type="EMBL" id="AF005048">
    <property type="protein sequence ID" value="AAB69176.1"/>
    <property type="molecule type" value="mRNA"/>
</dbReference>
<dbReference type="EMBL" id="AL163816">
    <property type="protein sequence ID" value="CAB87743.1"/>
    <property type="molecule type" value="Genomic_DNA"/>
</dbReference>
<dbReference type="EMBL" id="CP002686">
    <property type="protein sequence ID" value="AEE80419.1"/>
    <property type="molecule type" value="Genomic_DNA"/>
</dbReference>
<dbReference type="EMBL" id="BT001946">
    <property type="protein sequence ID" value="AAN71945.1"/>
    <property type="molecule type" value="mRNA"/>
</dbReference>
<dbReference type="EMBL" id="EF598824">
    <property type="protein sequence ID" value="ABR04117.1"/>
    <property type="molecule type" value="Genomic_DNA"/>
</dbReference>
<dbReference type="EMBL" id="EF598825">
    <property type="protein sequence ID" value="ABR04118.1"/>
    <property type="molecule type" value="Genomic_DNA"/>
</dbReference>
<dbReference type="EMBL" id="EF598826">
    <property type="protein sequence ID" value="ABR04119.1"/>
    <property type="molecule type" value="Genomic_DNA"/>
</dbReference>
<dbReference type="EMBL" id="EF598827">
    <property type="protein sequence ID" value="ABR04120.1"/>
    <property type="molecule type" value="Genomic_DNA"/>
</dbReference>
<dbReference type="EMBL" id="EF598828">
    <property type="protein sequence ID" value="ABR04121.1"/>
    <property type="molecule type" value="Genomic_DNA"/>
</dbReference>
<dbReference type="EMBL" id="EF598829">
    <property type="protein sequence ID" value="ABR04122.1"/>
    <property type="molecule type" value="Genomic_DNA"/>
</dbReference>
<dbReference type="EMBL" id="EF598830">
    <property type="protein sequence ID" value="ABR04123.1"/>
    <property type="molecule type" value="Genomic_DNA"/>
</dbReference>
<dbReference type="EMBL" id="EF598831">
    <property type="protein sequence ID" value="ABR04124.1"/>
    <property type="molecule type" value="Genomic_DNA"/>
</dbReference>
<dbReference type="EMBL" id="EF598832">
    <property type="protein sequence ID" value="ABR04125.1"/>
    <property type="molecule type" value="Genomic_DNA"/>
</dbReference>
<dbReference type="EMBL" id="EF598833">
    <property type="protein sequence ID" value="ABR04126.1"/>
    <property type="molecule type" value="Genomic_DNA"/>
</dbReference>
<dbReference type="EMBL" id="EF598834">
    <property type="protein sequence ID" value="ABR04127.1"/>
    <property type="molecule type" value="Genomic_DNA"/>
</dbReference>
<dbReference type="EMBL" id="EF598835">
    <property type="protein sequence ID" value="ABR04128.1"/>
    <property type="molecule type" value="Genomic_DNA"/>
</dbReference>
<dbReference type="EMBL" id="EF598836">
    <property type="protein sequence ID" value="ABR04129.1"/>
    <property type="molecule type" value="Genomic_DNA"/>
</dbReference>
<dbReference type="EMBL" id="EF598837">
    <property type="protein sequence ID" value="ABR04130.1"/>
    <property type="molecule type" value="Genomic_DNA"/>
</dbReference>
<dbReference type="EMBL" id="EF598838">
    <property type="protein sequence ID" value="ABR04131.1"/>
    <property type="molecule type" value="Genomic_DNA"/>
</dbReference>
<dbReference type="EMBL" id="EF598839">
    <property type="protein sequence ID" value="ABR04132.1"/>
    <property type="molecule type" value="Genomic_DNA"/>
</dbReference>
<dbReference type="EMBL" id="EF598840">
    <property type="protein sequence ID" value="ABR04133.1"/>
    <property type="molecule type" value="Genomic_DNA"/>
</dbReference>
<dbReference type="EMBL" id="EF598841">
    <property type="protein sequence ID" value="ABR04134.1"/>
    <property type="molecule type" value="Genomic_DNA"/>
</dbReference>
<dbReference type="EMBL" id="EF598842">
    <property type="protein sequence ID" value="ABR04135.1"/>
    <property type="molecule type" value="Genomic_DNA"/>
</dbReference>
<dbReference type="EMBL" id="EF598843">
    <property type="protein sequence ID" value="ABR04136.1"/>
    <property type="molecule type" value="Genomic_DNA"/>
</dbReference>
<dbReference type="EMBL" id="EF598844">
    <property type="protein sequence ID" value="ABR04137.1"/>
    <property type="molecule type" value="Genomic_DNA"/>
</dbReference>
<dbReference type="EMBL" id="EF598845">
    <property type="protein sequence ID" value="ABR04138.1"/>
    <property type="molecule type" value="Genomic_DNA"/>
</dbReference>
<dbReference type="EMBL" id="EF598846">
    <property type="protein sequence ID" value="ABR04139.1"/>
    <property type="molecule type" value="Genomic_DNA"/>
</dbReference>
<dbReference type="EMBL" id="EF598847">
    <property type="protein sequence ID" value="ABR04140.1"/>
    <property type="molecule type" value="Genomic_DNA"/>
</dbReference>
<dbReference type="EMBL" id="AK220790">
    <property type="protein sequence ID" value="BAD94031.1"/>
    <property type="status" value="ALT_INIT"/>
    <property type="molecule type" value="mRNA"/>
</dbReference>
<dbReference type="EMBL" id="EU550991">
    <property type="protein sequence ID" value="ACB31753.1"/>
    <property type="molecule type" value="Genomic_DNA"/>
</dbReference>
<dbReference type="EMBL" id="EU550992">
    <property type="protein sequence ID" value="ACB31754.1"/>
    <property type="molecule type" value="Genomic_DNA"/>
</dbReference>
<dbReference type="EMBL" id="EU550993">
    <property type="protein sequence ID" value="ACB31755.1"/>
    <property type="molecule type" value="Genomic_DNA"/>
</dbReference>
<dbReference type="EMBL" id="EU550994">
    <property type="protein sequence ID" value="ACB31756.1"/>
    <property type="molecule type" value="Genomic_DNA"/>
</dbReference>
<dbReference type="EMBL" id="EU550995">
    <property type="protein sequence ID" value="ACB31757.1"/>
    <property type="molecule type" value="Genomic_DNA"/>
</dbReference>
<dbReference type="EMBL" id="EU550996">
    <property type="protein sequence ID" value="ACB31758.1"/>
    <property type="molecule type" value="Genomic_DNA"/>
</dbReference>
<dbReference type="EMBL" id="EU550997">
    <property type="protein sequence ID" value="ACB31759.1"/>
    <property type="molecule type" value="Genomic_DNA"/>
</dbReference>
<dbReference type="EMBL" id="EU550998">
    <property type="protein sequence ID" value="ACB31760.1"/>
    <property type="molecule type" value="Genomic_DNA"/>
</dbReference>
<dbReference type="EMBL" id="EU550999">
    <property type="protein sequence ID" value="ACB31761.1"/>
    <property type="molecule type" value="Genomic_DNA"/>
</dbReference>
<dbReference type="EMBL" id="EU551000">
    <property type="protein sequence ID" value="ACB31762.1"/>
    <property type="molecule type" value="Genomic_DNA"/>
</dbReference>
<dbReference type="EMBL" id="EU551001">
    <property type="protein sequence ID" value="ACB31763.1"/>
    <property type="molecule type" value="Genomic_DNA"/>
</dbReference>
<dbReference type="EMBL" id="EU551002">
    <property type="protein sequence ID" value="ACB31764.1"/>
    <property type="molecule type" value="Genomic_DNA"/>
</dbReference>
<dbReference type="EMBL" id="EU551003">
    <property type="protein sequence ID" value="ACB31765.1"/>
    <property type="molecule type" value="Genomic_DNA"/>
</dbReference>
<dbReference type="EMBL" id="EU551004">
    <property type="protein sequence ID" value="ACB31766.1"/>
    <property type="molecule type" value="Genomic_DNA"/>
</dbReference>
<dbReference type="EMBL" id="EU551005">
    <property type="protein sequence ID" value="ACB31767.1"/>
    <property type="molecule type" value="Genomic_DNA"/>
</dbReference>
<dbReference type="EMBL" id="EU551006">
    <property type="protein sequence ID" value="ACB31768.1"/>
    <property type="molecule type" value="Genomic_DNA"/>
</dbReference>
<dbReference type="EMBL" id="EU551007">
    <property type="protein sequence ID" value="ACB31769.1"/>
    <property type="molecule type" value="Genomic_DNA"/>
</dbReference>
<dbReference type="EMBL" id="EU551008">
    <property type="protein sequence ID" value="ACB31770.1"/>
    <property type="molecule type" value="Genomic_DNA"/>
</dbReference>
<dbReference type="EMBL" id="EU551009">
    <property type="protein sequence ID" value="ACB31771.1"/>
    <property type="molecule type" value="Genomic_DNA"/>
</dbReference>
<dbReference type="EMBL" id="EU551010">
    <property type="protein sequence ID" value="ACB31772.1"/>
    <property type="molecule type" value="Genomic_DNA"/>
</dbReference>
<dbReference type="EMBL" id="EU551011">
    <property type="protein sequence ID" value="ACB31773.1"/>
    <property type="molecule type" value="Genomic_DNA"/>
</dbReference>
<dbReference type="EMBL" id="EU551012">
    <property type="protein sequence ID" value="ACB31774.1"/>
    <property type="molecule type" value="Genomic_DNA"/>
</dbReference>
<dbReference type="EMBL" id="EU551013">
    <property type="protein sequence ID" value="ACB31775.1"/>
    <property type="molecule type" value="Genomic_DNA"/>
</dbReference>
<dbReference type="EMBL" id="EU551014">
    <property type="protein sequence ID" value="ACB31776.1"/>
    <property type="molecule type" value="Genomic_DNA"/>
</dbReference>
<dbReference type="PIR" id="T48087">
    <property type="entry name" value="T48087"/>
</dbReference>
<dbReference type="RefSeq" id="NP_567135.1">
    <property type="nucleotide sequence ID" value="NM_116163.4"/>
</dbReference>
<dbReference type="PDB" id="2P1M">
    <property type="method" value="X-ray"/>
    <property type="resolution" value="1.80 A"/>
    <property type="chains" value="B=1-594"/>
</dbReference>
<dbReference type="PDB" id="2P1N">
    <property type="method" value="X-ray"/>
    <property type="resolution" value="2.50 A"/>
    <property type="chains" value="B/E=1-594"/>
</dbReference>
<dbReference type="PDB" id="2P1O">
    <property type="method" value="X-ray"/>
    <property type="resolution" value="1.90 A"/>
    <property type="chains" value="B=1-594"/>
</dbReference>
<dbReference type="PDB" id="2P1P">
    <property type="method" value="X-ray"/>
    <property type="resolution" value="2.21 A"/>
    <property type="chains" value="B=1-594"/>
</dbReference>
<dbReference type="PDB" id="2P1Q">
    <property type="method" value="X-ray"/>
    <property type="resolution" value="1.91 A"/>
    <property type="chains" value="B=1-594"/>
</dbReference>
<dbReference type="PDB" id="3C6N">
    <property type="method" value="X-ray"/>
    <property type="resolution" value="2.60 A"/>
    <property type="chains" value="B=1-594"/>
</dbReference>
<dbReference type="PDB" id="3C6O">
    <property type="method" value="X-ray"/>
    <property type="resolution" value="2.70 A"/>
    <property type="chains" value="B=1-594"/>
</dbReference>
<dbReference type="PDB" id="3C6P">
    <property type="method" value="X-ray"/>
    <property type="resolution" value="2.70 A"/>
    <property type="chains" value="B=1-594"/>
</dbReference>
<dbReference type="PDBsum" id="2P1M"/>
<dbReference type="PDBsum" id="2P1N"/>
<dbReference type="PDBsum" id="2P1O"/>
<dbReference type="PDBsum" id="2P1P"/>
<dbReference type="PDBsum" id="2P1Q"/>
<dbReference type="PDBsum" id="3C6N"/>
<dbReference type="PDBsum" id="3C6O"/>
<dbReference type="PDBsum" id="3C6P"/>
<dbReference type="SMR" id="Q570C0"/>
<dbReference type="BioGRID" id="10787">
    <property type="interactions" value="24"/>
</dbReference>
<dbReference type="ComplexPortal" id="CPX-1343">
    <property type="entry name" value="SCF(TIR1) ubiquitin ligase complex, variant CUL1-RBX1A-SKP1A"/>
</dbReference>
<dbReference type="ComplexPortal" id="CPX-1515">
    <property type="entry name" value="SCF(TIR1) ubiquitin ligase complex, variant CUL1-RBX1A-SKP1B"/>
</dbReference>
<dbReference type="ComplexPortal" id="CPX-1516">
    <property type="entry name" value="SCF(TIR1) ubiquitin ligase complex, variant CUL1-RBX1A-ASK3"/>
</dbReference>
<dbReference type="ComplexPortal" id="CPX-1517">
    <property type="entry name" value="SCF(TIR1) ubiquitin ligase complex, variant CUL1-RBX1A-ASK4"/>
</dbReference>
<dbReference type="ComplexPortal" id="CPX-1518">
    <property type="entry name" value="SCF(TIR1) ubiquitin ligase complex, variant CUL1-RBX1A-ASK5"/>
</dbReference>
<dbReference type="ComplexPortal" id="CPX-1519">
    <property type="entry name" value="SCF(TIR1) ubiquitin ligase complex, variant CUL1-RBX1A-ASK6"/>
</dbReference>
<dbReference type="ComplexPortal" id="CPX-1520">
    <property type="entry name" value="SCF(TIR1) ubiquitin ligase complex, variant CUL1-RBX1A-ASK7"/>
</dbReference>
<dbReference type="ComplexPortal" id="CPX-1521">
    <property type="entry name" value="SCF(TIR1) ubiquitin ligase complex, variant CUL1-RBX1A-ASK8"/>
</dbReference>
<dbReference type="ComplexPortal" id="CPX-1522">
    <property type="entry name" value="SCF(TIR1) ubiquitin ligase complex, variant CUL1-RBX1A-ASK9"/>
</dbReference>
<dbReference type="ComplexPortal" id="CPX-1523">
    <property type="entry name" value="SCF(TIR1) ubiquitin ligase complex, variant CUL1-RBX1A-ASK10"/>
</dbReference>
<dbReference type="ComplexPortal" id="CPX-1524">
    <property type="entry name" value="SCF(TIR1) ubiquitin ligase complex, variant CUL1-RBX1A-ASK11"/>
</dbReference>
<dbReference type="ComplexPortal" id="CPX-1525">
    <property type="entry name" value="SCF(TIR1) ubiquitin ligase complex, variant CUL1-RBX1A-ASK12"/>
</dbReference>
<dbReference type="ComplexPortal" id="CPX-1526">
    <property type="entry name" value="SCF(TIR1) ubiquitin ligase complex, variant CUL1-RBX1A-ASK13"/>
</dbReference>
<dbReference type="ComplexPortal" id="CPX-1527">
    <property type="entry name" value="SCF(TIR1) ubiquitin ligase complex, variant CUL1-RBX1A-ASK14"/>
</dbReference>
<dbReference type="ComplexPortal" id="CPX-1528">
    <property type="entry name" value="SCF(TIR1) ubiquitin ligase complex, variant CUL1-RBX1A-ASK15"/>
</dbReference>
<dbReference type="ComplexPortal" id="CPX-1529">
    <property type="entry name" value="SCF(TIR1) ubiquitin ligase complex, variant CUL1-RBX1A-ASK16"/>
</dbReference>
<dbReference type="ComplexPortal" id="CPX-1530">
    <property type="entry name" value="SCF(TIR1) ubiquitin ligase complex, variant CUL1-RBX1A-ASK17"/>
</dbReference>
<dbReference type="ComplexPortal" id="CPX-1531">
    <property type="entry name" value="SCF(TIR1) ubiquitin ligase complex, variant CUL1-RBX1A-ASK18"/>
</dbReference>
<dbReference type="ComplexPortal" id="CPX-1532">
    <property type="entry name" value="SCF(TIR1) ubiquitin ligase complex, variant CUL1-RBX1A-ASK19"/>
</dbReference>
<dbReference type="ComplexPortal" id="CPX-1533">
    <property type="entry name" value="SCF(TIR1) ubiquitin ligase complex, variant CUL1-RBX1A-ASK20"/>
</dbReference>
<dbReference type="ComplexPortal" id="CPX-1534">
    <property type="entry name" value="SCF(TIR1) ubiquitin ligase complex, variant CUL1-RBX1A-ASK21"/>
</dbReference>
<dbReference type="ComplexPortal" id="CPX-1535">
    <property type="entry name" value="SCF(TIR1) ubiquitin ligase complex, variant CUL1-RBX1B-SKP1A"/>
</dbReference>
<dbReference type="ComplexPortal" id="CPX-1536">
    <property type="entry name" value="SCF(TIR1) ubiquitin ligase complex, variant CUL1-RBX1B-SKP1B"/>
</dbReference>
<dbReference type="ComplexPortal" id="CPX-1537">
    <property type="entry name" value="SCF(TIR1) ubiquitin ligase complex, variant CUL1-RBX1B-ASK3"/>
</dbReference>
<dbReference type="ComplexPortal" id="CPX-1538">
    <property type="entry name" value="SCF(TIR1) ubiquitin ligase complex, variant CUL1-RBX1B-ASK4"/>
</dbReference>
<dbReference type="ComplexPortal" id="CPX-1539">
    <property type="entry name" value="SCF(TIR1) ubiquitin ligase complex, variant CUL1-RBX1B-ASK5"/>
</dbReference>
<dbReference type="ComplexPortal" id="CPX-1540">
    <property type="entry name" value="SCF(TIR1) ubiquitin ligase complex, variant CUL1-RBX1B-ASK6"/>
</dbReference>
<dbReference type="ComplexPortal" id="CPX-1541">
    <property type="entry name" value="SCF(TIR1) ubiquitin ligase complex, variant CUL1-RBX1B-ASK7"/>
</dbReference>
<dbReference type="ComplexPortal" id="CPX-1542">
    <property type="entry name" value="SCF(TIR1) ubiquitin ligase complex, variant CUL1-RBX1B-ASK8"/>
</dbReference>
<dbReference type="ComplexPortal" id="CPX-1543">
    <property type="entry name" value="SCF(TIR1) ubiquitin ligase complex, variant CUL1-RBX1B-ASK9"/>
</dbReference>
<dbReference type="ComplexPortal" id="CPX-1544">
    <property type="entry name" value="SCF(TIR1) ubiquitin ligase complex, variant CUL1-RBX1B-ASK10"/>
</dbReference>
<dbReference type="ComplexPortal" id="CPX-1545">
    <property type="entry name" value="SCF(TIR1) ubiquitin ligase complex, variant CUL1-RBX1B-ASK11"/>
</dbReference>
<dbReference type="ComplexPortal" id="CPX-1546">
    <property type="entry name" value="SCF(TIR1) ubiquitin ligase complex, variant CUL1-RBX1B-ASK12"/>
</dbReference>
<dbReference type="ComplexPortal" id="CPX-1547">
    <property type="entry name" value="SCF(TIR1) ubiquitin ligase complex, variant CUL1-RBX1B-ASK13"/>
</dbReference>
<dbReference type="ComplexPortal" id="CPX-1548">
    <property type="entry name" value="SCF(TIR1) ubiquitin ligase complex, variant CUL1-RBX1B-ASK14"/>
</dbReference>
<dbReference type="ComplexPortal" id="CPX-1549">
    <property type="entry name" value="SCF(TIR1) ubiquitin ligase complex, variant CUL1-RBX1B-ASK15"/>
</dbReference>
<dbReference type="ComplexPortal" id="CPX-1550">
    <property type="entry name" value="SCF(TIR1) ubiquitin ligase complex, variant CUL1-RBX1B-ASK16"/>
</dbReference>
<dbReference type="ComplexPortal" id="CPX-1551">
    <property type="entry name" value="SCF(TIR1) ubiquitin ligase complex, variant CUL1-RBX1B-ASK17"/>
</dbReference>
<dbReference type="ComplexPortal" id="CPX-1552">
    <property type="entry name" value="SCF(TIR1) ubiquitin ligase complex, variant CUL1-RBX1B-ASK18"/>
</dbReference>
<dbReference type="ComplexPortal" id="CPX-1553">
    <property type="entry name" value="SCF(TIR1) ubiquitin ligase complex, variant CUL1-RBX1B-ASK19"/>
</dbReference>
<dbReference type="ComplexPortal" id="CPX-1554">
    <property type="entry name" value="SCF(TIR1) ubiquitin ligase complex, variant CUL1-RBX1B-ASK20"/>
</dbReference>
<dbReference type="ComplexPortal" id="CPX-1555">
    <property type="entry name" value="SCF(TIR1) ubiquitin ligase complex, variant CUL1-RBX1B-ASK21"/>
</dbReference>
<dbReference type="ComplexPortal" id="CPX-1557">
    <property type="entry name" value="SCF(TIR1) ubiquitin ligase complex, variant CUL2-RBX1A-SKP1A"/>
</dbReference>
<dbReference type="ComplexPortal" id="CPX-1558">
    <property type="entry name" value="SCF(TIR1) ubiquitin ligase complex, variant CUL2-RBX1A-SKP1B"/>
</dbReference>
<dbReference type="ComplexPortal" id="CPX-1559">
    <property type="entry name" value="SCF(TIR1) ubiquitin ligase complex, variant CUL2-RBX1A-ASK3"/>
</dbReference>
<dbReference type="ComplexPortal" id="CPX-1560">
    <property type="entry name" value="SCF(TIR1) ubiquitin ligase complex, variant CUL2-RBX1A-ASK4"/>
</dbReference>
<dbReference type="ComplexPortal" id="CPX-1561">
    <property type="entry name" value="SCF(TIR1) ubiquitin ligase complex, variant CUL2-RBX1A-ASK5"/>
</dbReference>
<dbReference type="ComplexPortal" id="CPX-1562">
    <property type="entry name" value="SCF(TIR1) ubiquitin ligase complex, variant CUL2-RBX1A-ASK6"/>
</dbReference>
<dbReference type="ComplexPortal" id="CPX-1563">
    <property type="entry name" value="SCF(TIR1) ubiquitin ligase complex, variant CUL2-RBX1A-ASK7"/>
</dbReference>
<dbReference type="ComplexPortal" id="CPX-1564">
    <property type="entry name" value="SCF(TIR1) ubiquitin ligase complex, variant CUL2-RBX1A-ASK8"/>
</dbReference>
<dbReference type="ComplexPortal" id="CPX-1565">
    <property type="entry name" value="SCF(TIR1) ubiquitin ligase complex, variant CUL2-RBX1A-ASK9"/>
</dbReference>
<dbReference type="ComplexPortal" id="CPX-1566">
    <property type="entry name" value="SCF(TIR1) ubiquitin ligase complex, variant CUL2-RBX1A-ASK10"/>
</dbReference>
<dbReference type="ComplexPortal" id="CPX-1567">
    <property type="entry name" value="SCF(TIR1) ubiquitin ligase complex, variant CUL2-RBX1A-ASK11"/>
</dbReference>
<dbReference type="ComplexPortal" id="CPX-1568">
    <property type="entry name" value="SCF(TIR1) ubiquitin ligase complex, variant CUL2-RBX1A-ASK12"/>
</dbReference>
<dbReference type="ComplexPortal" id="CPX-1569">
    <property type="entry name" value="SCF(TIR1) ubiquitin ligase complex, variant CUL2-RBX1A-ASK13"/>
</dbReference>
<dbReference type="ComplexPortal" id="CPX-1570">
    <property type="entry name" value="SCF(TIR1) ubiquitin ligase complex, variant CUL2-RBX1A-ASK14"/>
</dbReference>
<dbReference type="ComplexPortal" id="CPX-1571">
    <property type="entry name" value="SCF(TIR1) ubiquitin ligase complex, variant CUL2-RBX1A-ASK15"/>
</dbReference>
<dbReference type="ComplexPortal" id="CPX-1572">
    <property type="entry name" value="SCF(TIR1) ubiquitin ligase complex, variant CUL2-RBX1A-ASK16"/>
</dbReference>
<dbReference type="ComplexPortal" id="CPX-1573">
    <property type="entry name" value="SCF(TIR1) ubiquitin ligase complex, variant CUL2-RBX1A-ASK17"/>
</dbReference>
<dbReference type="ComplexPortal" id="CPX-1574">
    <property type="entry name" value="SCF(TIR1) ubiquitin ligase complex, variant CUL2-RBX1A-ASK18"/>
</dbReference>
<dbReference type="ComplexPortal" id="CPX-1575">
    <property type="entry name" value="SCF(TIR1) ubiquitin ligase complex, variant CUL2-RBX1A-ASK19"/>
</dbReference>
<dbReference type="ComplexPortal" id="CPX-1576">
    <property type="entry name" value="SCF(TIR1) ubiquitin ligase complex, variant CUL2-RBX1A-ASK20"/>
</dbReference>
<dbReference type="ComplexPortal" id="CPX-1577">
    <property type="entry name" value="SCF(TIR1) ubiquitin ligase complex, variant CUL2-RBX1A-ASK21"/>
</dbReference>
<dbReference type="ComplexPortal" id="CPX-1578">
    <property type="entry name" value="SCF(TIR1) ubiquitin ligase complex, variant CUL2-RBX1B-SKP1A"/>
</dbReference>
<dbReference type="ComplexPortal" id="CPX-1579">
    <property type="entry name" value="SCF(TIR1) ubiquitin ligase complex, variant CUL2-RBX1B-SKP1B"/>
</dbReference>
<dbReference type="ComplexPortal" id="CPX-1580">
    <property type="entry name" value="SCF(TIR1) ubiquitin ligase complex, variant CUL2-RBX1B-ASK3"/>
</dbReference>
<dbReference type="ComplexPortal" id="CPX-1581">
    <property type="entry name" value="SCF(TIR1) ubiquitin ligase complex, variant CUL2-RBX1B-ASK4"/>
</dbReference>
<dbReference type="ComplexPortal" id="CPX-1582">
    <property type="entry name" value="SCF(TIR1) ubiquitin ligase complex, variant CUL2-RBX1B-ASK5"/>
</dbReference>
<dbReference type="ComplexPortal" id="CPX-1583">
    <property type="entry name" value="SCF(TIR1) ubiquitin ligase complex, variant CUL2-RBX1B-ASK6"/>
</dbReference>
<dbReference type="ComplexPortal" id="CPX-1584">
    <property type="entry name" value="SCF(TIR1) ubiquitin ligase complex, variant CUL2-RBX1B-ASK7"/>
</dbReference>
<dbReference type="ComplexPortal" id="CPX-1585">
    <property type="entry name" value="SCF(TIR1) ubiquitin ligase complex, variant CUL2-RBX1B-ASK8"/>
</dbReference>
<dbReference type="ComplexPortal" id="CPX-1586">
    <property type="entry name" value="SCF(TIR1) ubiquitin ligase complex, variant CUL2-RBX1B-ASK9"/>
</dbReference>
<dbReference type="ComplexPortal" id="CPX-1587">
    <property type="entry name" value="SCF(TIR1) ubiquitin ligase complex, variant CUL2-RBX1B-ASK10"/>
</dbReference>
<dbReference type="ComplexPortal" id="CPX-1588">
    <property type="entry name" value="SCF(TIR1) ubiquitin ligase complex, variant CUL2-RBX1B-ASK11"/>
</dbReference>
<dbReference type="ComplexPortal" id="CPX-1589">
    <property type="entry name" value="SCF(TIR1) ubiquitin ligase complex, variant CUL2-RBX1B-ASK12"/>
</dbReference>
<dbReference type="ComplexPortal" id="CPX-1590">
    <property type="entry name" value="SCF(TIR1) ubiquitin ligase complex, variant CUL2-RBX1B-ASK13"/>
</dbReference>
<dbReference type="ComplexPortal" id="CPX-1591">
    <property type="entry name" value="SCF(TIR1) ubiquitin ligase complex, variant CUL2-RBX1B-ASK14"/>
</dbReference>
<dbReference type="ComplexPortal" id="CPX-1592">
    <property type="entry name" value="SCF(TIR1) ubiquitin ligase complex, variant CUL2-RBX1B-ASK15"/>
</dbReference>
<dbReference type="ComplexPortal" id="CPX-1593">
    <property type="entry name" value="SCF(TIR1) ubiquitin ligase complex, variant CUL2-RBX1B-ASK16"/>
</dbReference>
<dbReference type="ComplexPortal" id="CPX-1594">
    <property type="entry name" value="SCF(TIR1) ubiquitin ligase complex, variant CUL2-RBX1B-ASK17"/>
</dbReference>
<dbReference type="ComplexPortal" id="CPX-1595">
    <property type="entry name" value="SCF(TIR1) ubiquitin ligase complex, variant CUL2-RBX1B-ASK18"/>
</dbReference>
<dbReference type="ComplexPortal" id="CPX-1596">
    <property type="entry name" value="SCF(TIR1) ubiquitin ligase complex, variant CUL2-RBX1B-ASK19"/>
</dbReference>
<dbReference type="ComplexPortal" id="CPX-1597">
    <property type="entry name" value="SCF(TIR1) ubiquitin ligase complex, variant CUL2-RBX1B-ASK20"/>
</dbReference>
<dbReference type="ComplexPortal" id="CPX-1598">
    <property type="entry name" value="SCF(TIR1) ubiquitin ligase complex, variant CUL2-RBX1B-ASK21"/>
</dbReference>
<dbReference type="DIP" id="DIP-31740N"/>
<dbReference type="ELM" id="Q570C0"/>
<dbReference type="FunCoup" id="Q570C0">
    <property type="interactions" value="880"/>
</dbReference>
<dbReference type="IntAct" id="Q570C0">
    <property type="interactions" value="21"/>
</dbReference>
<dbReference type="STRING" id="3702.Q570C0"/>
<dbReference type="iPTMnet" id="Q570C0"/>
<dbReference type="PaxDb" id="3702-AT3G62980.1"/>
<dbReference type="ProteomicsDB" id="232425"/>
<dbReference type="EnsemblPlants" id="AT3G62980.1">
    <property type="protein sequence ID" value="AT3G62980.1"/>
    <property type="gene ID" value="AT3G62980"/>
</dbReference>
<dbReference type="GeneID" id="825473"/>
<dbReference type="Gramene" id="AT3G62980.1">
    <property type="protein sequence ID" value="AT3G62980.1"/>
    <property type="gene ID" value="AT3G62980"/>
</dbReference>
<dbReference type="KEGG" id="ath:AT3G62980"/>
<dbReference type="Araport" id="AT3G62980"/>
<dbReference type="TAIR" id="AT3G62980">
    <property type="gene designation" value="TIR1"/>
</dbReference>
<dbReference type="eggNOG" id="KOG1947">
    <property type="taxonomic scope" value="Eukaryota"/>
</dbReference>
<dbReference type="HOGENOM" id="CLU_022456_1_0_1"/>
<dbReference type="InParanoid" id="Q570C0"/>
<dbReference type="OMA" id="LPWIAEM"/>
<dbReference type="OrthoDB" id="423607at2759"/>
<dbReference type="PhylomeDB" id="Q570C0"/>
<dbReference type="UniPathway" id="UPA00143"/>
<dbReference type="EvolutionaryTrace" id="Q570C0"/>
<dbReference type="PRO" id="PR:Q570C0"/>
<dbReference type="Proteomes" id="UP000006548">
    <property type="component" value="Chromosome 3"/>
</dbReference>
<dbReference type="ExpressionAtlas" id="Q570C0">
    <property type="expression patterns" value="baseline and differential"/>
</dbReference>
<dbReference type="GO" id="GO:0005634">
    <property type="term" value="C:nucleus"/>
    <property type="evidence" value="ECO:0007669"/>
    <property type="project" value="UniProtKB-SubCell"/>
</dbReference>
<dbReference type="GO" id="GO:0019005">
    <property type="term" value="C:SCF ubiquitin ligase complex"/>
    <property type="evidence" value="ECO:0000314"/>
    <property type="project" value="TAIR"/>
</dbReference>
<dbReference type="GO" id="GO:0010011">
    <property type="term" value="F:auxin binding"/>
    <property type="evidence" value="ECO:0000314"/>
    <property type="project" value="UniProtKB"/>
</dbReference>
<dbReference type="GO" id="GO:0038198">
    <property type="term" value="F:auxin receptor activity"/>
    <property type="evidence" value="ECO:0000314"/>
    <property type="project" value="UniProtKB"/>
</dbReference>
<dbReference type="GO" id="GO:0000822">
    <property type="term" value="F:inositol hexakisphosphate binding"/>
    <property type="evidence" value="ECO:0000314"/>
    <property type="project" value="UniProtKB"/>
</dbReference>
<dbReference type="GO" id="GO:0004842">
    <property type="term" value="F:ubiquitin-protein transferase activity"/>
    <property type="evidence" value="ECO:0000305"/>
    <property type="project" value="TAIR"/>
</dbReference>
<dbReference type="GO" id="GO:0009734">
    <property type="term" value="P:auxin-activated signaling pathway"/>
    <property type="evidence" value="ECO:0000315"/>
    <property type="project" value="UniProtKB"/>
</dbReference>
<dbReference type="GO" id="GO:0016036">
    <property type="term" value="P:cellular response to phosphate starvation"/>
    <property type="evidence" value="ECO:0000270"/>
    <property type="project" value="TAIR"/>
</dbReference>
<dbReference type="GO" id="GO:0006952">
    <property type="term" value="P:defense response"/>
    <property type="evidence" value="ECO:0007669"/>
    <property type="project" value="UniProtKB-KW"/>
</dbReference>
<dbReference type="GO" id="GO:0009873">
    <property type="term" value="P:ethylene-activated signaling pathway"/>
    <property type="evidence" value="ECO:0007669"/>
    <property type="project" value="UniProtKB-KW"/>
</dbReference>
<dbReference type="GO" id="GO:0010311">
    <property type="term" value="P:lateral root formation"/>
    <property type="evidence" value="ECO:0000315"/>
    <property type="project" value="TAIR"/>
</dbReference>
<dbReference type="GO" id="GO:0010152">
    <property type="term" value="P:pollen maturation"/>
    <property type="evidence" value="ECO:0000316"/>
    <property type="project" value="TAIR"/>
</dbReference>
<dbReference type="GO" id="GO:0016567">
    <property type="term" value="P:protein ubiquitination"/>
    <property type="evidence" value="ECO:0007669"/>
    <property type="project" value="UniProtKB-UniPathway"/>
</dbReference>
<dbReference type="GO" id="GO:0009733">
    <property type="term" value="P:response to auxin"/>
    <property type="evidence" value="ECO:0000315"/>
    <property type="project" value="TAIR"/>
</dbReference>
<dbReference type="GO" id="GO:0048443">
    <property type="term" value="P:stamen development"/>
    <property type="evidence" value="ECO:0000316"/>
    <property type="project" value="TAIR"/>
</dbReference>
<dbReference type="CDD" id="cd22159">
    <property type="entry name" value="F-box_AtTIR1-like"/>
    <property type="match status" value="1"/>
</dbReference>
<dbReference type="FunFam" id="1.20.1280.50:FF:000006">
    <property type="entry name" value="Transport inhibitor response 1"/>
    <property type="match status" value="1"/>
</dbReference>
<dbReference type="FunFam" id="3.80.10.10:FF:000029">
    <property type="entry name" value="Transport inhibitor response 1"/>
    <property type="match status" value="1"/>
</dbReference>
<dbReference type="Gene3D" id="1.20.1280.50">
    <property type="match status" value="1"/>
</dbReference>
<dbReference type="Gene3D" id="3.80.10.10">
    <property type="entry name" value="Ribonuclease Inhibitor"/>
    <property type="match status" value="1"/>
</dbReference>
<dbReference type="InterPro" id="IPR041567">
    <property type="entry name" value="COI1_F-box"/>
</dbReference>
<dbReference type="InterPro" id="IPR036047">
    <property type="entry name" value="F-box-like_dom_sf"/>
</dbReference>
<dbReference type="InterPro" id="IPR001810">
    <property type="entry name" value="F-box_dom"/>
</dbReference>
<dbReference type="InterPro" id="IPR006553">
    <property type="entry name" value="Leu-rich_rpt_Cys-con_subtyp"/>
</dbReference>
<dbReference type="InterPro" id="IPR032675">
    <property type="entry name" value="LRR_dom_sf"/>
</dbReference>
<dbReference type="InterPro" id="IPR041101">
    <property type="entry name" value="Transp_inhibit"/>
</dbReference>
<dbReference type="PANTHER" id="PTHR16134">
    <property type="entry name" value="F-BOX/TPR REPEAT PROTEIN POF3"/>
    <property type="match status" value="1"/>
</dbReference>
<dbReference type="PANTHER" id="PTHR16134:SF66">
    <property type="entry name" value="PROTEIN TRANSPORT INHIBITOR RESPONSE 1"/>
    <property type="match status" value="1"/>
</dbReference>
<dbReference type="Pfam" id="PF18511">
    <property type="entry name" value="F-box_5"/>
    <property type="match status" value="1"/>
</dbReference>
<dbReference type="Pfam" id="PF18791">
    <property type="entry name" value="Transp_inhibit"/>
    <property type="match status" value="1"/>
</dbReference>
<dbReference type="SMART" id="SM00256">
    <property type="entry name" value="FBOX"/>
    <property type="match status" value="1"/>
</dbReference>
<dbReference type="SMART" id="SM00367">
    <property type="entry name" value="LRR_CC"/>
    <property type="match status" value="6"/>
</dbReference>
<dbReference type="SUPFAM" id="SSF81383">
    <property type="entry name" value="F-box domain"/>
    <property type="match status" value="1"/>
</dbReference>
<dbReference type="SUPFAM" id="SSF52047">
    <property type="entry name" value="RNI-like"/>
    <property type="match status" value="1"/>
</dbReference>
<evidence type="ECO:0000269" key="1">
    <source>
    </source>
</evidence>
<evidence type="ECO:0000269" key="2">
    <source>
    </source>
</evidence>
<evidence type="ECO:0000269" key="3">
    <source>
    </source>
</evidence>
<evidence type="ECO:0000269" key="4">
    <source>
    </source>
</evidence>
<evidence type="ECO:0000269" key="5">
    <source>
    </source>
</evidence>
<evidence type="ECO:0000269" key="6">
    <source>
    </source>
</evidence>
<evidence type="ECO:0000269" key="7">
    <source>
    </source>
</evidence>
<evidence type="ECO:0000269" key="8">
    <source>
    </source>
</evidence>
<evidence type="ECO:0000269" key="9">
    <source>
    </source>
</evidence>
<evidence type="ECO:0000269" key="10">
    <source>
    </source>
</evidence>
<evidence type="ECO:0000269" key="11">
    <source>
    </source>
</evidence>
<evidence type="ECO:0000269" key="12">
    <source>
    </source>
</evidence>
<evidence type="ECO:0000269" key="13">
    <source>
    </source>
</evidence>
<evidence type="ECO:0000305" key="14"/>
<evidence type="ECO:0007744" key="15">
    <source>
        <dbReference type="PDB" id="2P1M"/>
    </source>
</evidence>
<evidence type="ECO:0007744" key="16">
    <source>
        <dbReference type="PDB" id="2P1N"/>
    </source>
</evidence>
<evidence type="ECO:0007744" key="17">
    <source>
        <dbReference type="PDB" id="2P1O"/>
    </source>
</evidence>
<evidence type="ECO:0007744" key="18">
    <source>
        <dbReference type="PDB" id="2P1P"/>
    </source>
</evidence>
<evidence type="ECO:0007744" key="19">
    <source>
        <dbReference type="PDB" id="2P1Q"/>
    </source>
</evidence>
<evidence type="ECO:0007829" key="20">
    <source>
        <dbReference type="PDB" id="2P1M"/>
    </source>
</evidence>
<evidence type="ECO:0007829" key="21">
    <source>
        <dbReference type="PDB" id="2P1N"/>
    </source>
</evidence>
<evidence type="ECO:0007829" key="22">
    <source>
        <dbReference type="PDB" id="3C6N"/>
    </source>
</evidence>
<feature type="chain" id="PRO_0000119965" description="Protein TRANSPORT INHIBITOR RESPONSE 1">
    <location>
        <begin position="1"/>
        <end position="594"/>
    </location>
</feature>
<feature type="domain" description="F-box">
    <location>
        <begin position="3"/>
        <end position="50"/>
    </location>
</feature>
<feature type="region of interest" description="Interaction with auxin-responsive proteins">
    <location>
        <begin position="81"/>
        <end position="82"/>
    </location>
</feature>
<feature type="region of interest" description="Interaction with auxin-responsive proteins">
    <location>
        <begin position="347"/>
        <end position="352"/>
    </location>
</feature>
<feature type="region of interest" description="Interaction with auxin-responsive proteins">
    <location>
        <begin position="405"/>
        <end position="409"/>
    </location>
</feature>
<feature type="region of interest" description="Interaction with auxin-responsive proteins">
    <location>
        <begin position="464"/>
        <end position="465"/>
    </location>
</feature>
<feature type="binding site" evidence="11 12">
    <location>
        <position position="74"/>
    </location>
    <ligand>
        <name>1D-myo-inositol hexakisphosphate</name>
        <dbReference type="ChEBI" id="CHEBI:58130"/>
    </ligand>
</feature>
<feature type="binding site">
    <location>
        <begin position="113"/>
        <end position="114"/>
    </location>
    <ligand>
        <name>1D-myo-inositol hexakisphosphate</name>
        <dbReference type="ChEBI" id="CHEBI:58130"/>
    </ligand>
</feature>
<feature type="binding site" evidence="11 12">
    <location>
        <position position="344"/>
    </location>
    <ligand>
        <name>1D-myo-inositol hexakisphosphate</name>
        <dbReference type="ChEBI" id="CHEBI:58130"/>
    </ligand>
</feature>
<feature type="binding site">
    <location>
        <begin position="401"/>
        <end position="403"/>
    </location>
    <ligand>
        <name>1D-myo-inositol hexakisphosphate</name>
        <dbReference type="ChEBI" id="CHEBI:58130"/>
    </ligand>
</feature>
<feature type="binding site" evidence="11 18 19">
    <location>
        <position position="403"/>
    </location>
    <ligand>
        <name>(indol-3-yl)acetate</name>
        <dbReference type="ChEBI" id="CHEBI:30854"/>
    </ligand>
</feature>
<feature type="binding site" evidence="11 12">
    <location>
        <position position="436"/>
    </location>
    <ligand>
        <name>1D-myo-inositol hexakisphosphate</name>
        <dbReference type="ChEBI" id="CHEBI:58130"/>
    </ligand>
</feature>
<feature type="binding site" evidence="11 18 19">
    <location>
        <begin position="438"/>
        <end position="439"/>
    </location>
    <ligand>
        <name>(indol-3-yl)acetate</name>
        <dbReference type="ChEBI" id="CHEBI:30854"/>
    </ligand>
</feature>
<feature type="binding site">
    <location>
        <begin position="484"/>
        <end position="485"/>
    </location>
    <ligand>
        <name>1D-myo-inositol hexakisphosphate</name>
        <dbReference type="ChEBI" id="CHEBI:58130"/>
    </ligand>
</feature>
<feature type="binding site" evidence="11 12">
    <location>
        <position position="509"/>
    </location>
    <ligand>
        <name>1D-myo-inositol hexakisphosphate</name>
        <dbReference type="ChEBI" id="CHEBI:58130"/>
    </ligand>
</feature>
<feature type="site" description="Interaction with auxin-responsive proteins">
    <location>
        <position position="139"/>
    </location>
</feature>
<feature type="site" description="Interaction with auxin-responsive proteins">
    <location>
        <position position="165"/>
    </location>
</feature>
<feature type="site" description="Interaction with auxin-responsive proteins">
    <location>
        <position position="380"/>
    </location>
</feature>
<feature type="site" description="Interaction with auxin-responsive proteins">
    <location>
        <position position="489"/>
    </location>
</feature>
<feature type="mutagenesis site" description="Abolishes SCF(TIR1) complex formation, altered auxin-mediated response and reduced affinity for auxin." evidence="1 8">
    <original>P</original>
    <variation>A</variation>
    <location>
        <position position="10"/>
    </location>
</feature>
<feature type="mutagenesis site" description="No affinity for auxin." evidence="8">
    <original>V</original>
    <variation>A</variation>
    <location>
        <position position="33"/>
    </location>
</feature>
<feature type="mutagenesis site" description="No affinity for auxin." evidence="8">
    <original>K</original>
    <variation>A</variation>
    <location>
        <position position="35"/>
    </location>
</feature>
<feature type="mutagenesis site" description="In tir1-1; insensitive to auxin ubiquitously and to ethylene in roots only." evidence="13">
    <original>G</original>
    <variation>D</variation>
    <location>
        <position position="147"/>
    </location>
</feature>
<feature type="mutagenesis site" description="In tir1-2; insensitive to auxin." evidence="13">
    <original>G</original>
    <variation>D</variation>
    <location>
        <position position="441"/>
    </location>
</feature>
<feature type="mutagenesis site" description="In tir1-101/wei1; insensitive to auxin ubiquitously and to ethylene in roots only." evidence="5">
    <location>
        <begin position="574"/>
        <end position="594"/>
    </location>
</feature>
<feature type="sequence conflict" description="In Ref. 6; BAD94031." evidence="14" ref="6">
    <original>D</original>
    <variation>E</variation>
    <location>
        <position position="490"/>
    </location>
</feature>
<feature type="sequence conflict" description="In Ref. 6; BAD94031." evidence="14" ref="6">
    <original>D</original>
    <variation>G</variation>
    <location>
        <position position="568"/>
    </location>
</feature>
<feature type="helix" evidence="20">
    <location>
        <begin position="11"/>
        <end position="19"/>
    </location>
</feature>
<feature type="helix" evidence="20">
    <location>
        <begin position="24"/>
        <end position="31"/>
    </location>
</feature>
<feature type="helix" evidence="20">
    <location>
        <begin position="35"/>
        <end position="44"/>
    </location>
</feature>
<feature type="strand" evidence="20">
    <location>
        <begin position="47"/>
        <end position="52"/>
    </location>
</feature>
<feature type="helix" evidence="21">
    <location>
        <begin position="53"/>
        <end position="55"/>
    </location>
</feature>
<feature type="helix" evidence="20">
    <location>
        <begin position="58"/>
        <end position="64"/>
    </location>
</feature>
<feature type="strand" evidence="20">
    <location>
        <begin position="70"/>
        <end position="74"/>
    </location>
</feature>
<feature type="helix" evidence="20">
    <location>
        <begin position="78"/>
        <end position="82"/>
    </location>
</feature>
<feature type="helix" evidence="20">
    <location>
        <begin position="94"/>
        <end position="103"/>
    </location>
</feature>
<feature type="strand" evidence="20">
    <location>
        <begin position="109"/>
        <end position="114"/>
    </location>
</feature>
<feature type="helix" evidence="20">
    <location>
        <begin position="119"/>
        <end position="128"/>
    </location>
</feature>
<feature type="strand" evidence="20">
    <location>
        <begin position="134"/>
        <end position="139"/>
    </location>
</feature>
<feature type="strand" evidence="20">
    <location>
        <begin position="141"/>
        <end position="144"/>
    </location>
</feature>
<feature type="helix" evidence="20">
    <location>
        <begin position="145"/>
        <end position="154"/>
    </location>
</feature>
<feature type="strand" evidence="20">
    <location>
        <begin position="160"/>
        <end position="162"/>
    </location>
</feature>
<feature type="strand" evidence="20">
    <location>
        <begin position="167"/>
        <end position="169"/>
    </location>
</feature>
<feature type="helix" evidence="20">
    <location>
        <begin position="173"/>
        <end position="178"/>
    </location>
</feature>
<feature type="strand" evidence="20">
    <location>
        <begin position="188"/>
        <end position="190"/>
    </location>
</feature>
<feature type="helix" evidence="20">
    <location>
        <begin position="200"/>
        <end position="209"/>
    </location>
</feature>
<feature type="strand" evidence="20">
    <location>
        <begin position="215"/>
        <end position="217"/>
    </location>
</feature>
<feature type="helix" evidence="20">
    <location>
        <begin position="224"/>
        <end position="233"/>
    </location>
</feature>
<feature type="strand" evidence="20">
    <location>
        <begin position="238"/>
        <end position="241"/>
    </location>
</feature>
<feature type="helix" evidence="20">
    <location>
        <begin position="251"/>
        <end position="262"/>
    </location>
</feature>
<feature type="strand" evidence="20">
    <location>
        <begin position="269"/>
        <end position="271"/>
    </location>
</feature>
<feature type="helix" evidence="20">
    <location>
        <begin position="278"/>
        <end position="284"/>
    </location>
</feature>
<feature type="helix" evidence="20">
    <location>
        <begin position="285"/>
        <end position="288"/>
    </location>
</feature>
<feature type="strand" evidence="20">
    <location>
        <begin position="293"/>
        <end position="295"/>
    </location>
</feature>
<feature type="helix" evidence="20">
    <location>
        <begin position="303"/>
        <end position="310"/>
    </location>
</feature>
<feature type="strand" evidence="20">
    <location>
        <begin position="318"/>
        <end position="322"/>
    </location>
</feature>
<feature type="helix" evidence="20">
    <location>
        <begin position="323"/>
        <end position="325"/>
    </location>
</feature>
<feature type="helix" evidence="20">
    <location>
        <begin position="326"/>
        <end position="336"/>
    </location>
</feature>
<feature type="strand" evidence="20">
    <location>
        <begin position="342"/>
        <end position="346"/>
    </location>
</feature>
<feature type="strand" evidence="22">
    <location>
        <begin position="350"/>
        <end position="352"/>
    </location>
</feature>
<feature type="helix" evidence="20">
    <location>
        <begin position="361"/>
        <end position="370"/>
    </location>
</feature>
<feature type="strand" evidence="20">
    <location>
        <begin position="376"/>
        <end position="382"/>
    </location>
</feature>
<feature type="helix" evidence="20">
    <location>
        <begin position="386"/>
        <end position="395"/>
    </location>
</feature>
<feature type="strand" evidence="20">
    <location>
        <begin position="401"/>
        <end position="408"/>
    </location>
</feature>
<feature type="turn" evidence="20">
    <location>
        <begin position="414"/>
        <end position="416"/>
    </location>
</feature>
<feature type="helix" evidence="20">
    <location>
        <begin position="421"/>
        <end position="430"/>
    </location>
</feature>
<feature type="strand" evidence="20">
    <location>
        <begin position="436"/>
        <end position="438"/>
    </location>
</feature>
<feature type="helix" evidence="20">
    <location>
        <begin position="445"/>
        <end position="454"/>
    </location>
</feature>
<feature type="strand" evidence="20">
    <location>
        <begin position="460"/>
        <end position="465"/>
    </location>
</feature>
<feature type="helix" evidence="20">
    <location>
        <begin position="470"/>
        <end position="479"/>
    </location>
</feature>
<feature type="strand" evidence="20">
    <location>
        <begin position="485"/>
        <end position="490"/>
    </location>
</feature>
<feature type="helix" evidence="20">
    <location>
        <begin position="495"/>
        <end position="500"/>
    </location>
</feature>
<feature type="helix" evidence="20">
    <location>
        <begin position="502"/>
        <end position="507"/>
    </location>
</feature>
<feature type="strand" evidence="20">
    <location>
        <begin position="508"/>
        <end position="516"/>
    </location>
</feature>
<feature type="helix" evidence="20">
    <location>
        <begin position="520"/>
        <end position="529"/>
    </location>
</feature>
<feature type="strand" evidence="20">
    <location>
        <begin position="533"/>
        <end position="538"/>
    </location>
</feature>
<feature type="strand" evidence="20">
    <location>
        <begin position="540"/>
        <end position="542"/>
    </location>
</feature>
<feature type="helix" evidence="20">
    <location>
        <begin position="544"/>
        <end position="546"/>
    </location>
</feature>
<feature type="strand" evidence="20">
    <location>
        <begin position="554"/>
        <end position="560"/>
    </location>
</feature>
<feature type="strand" evidence="20">
    <location>
        <begin position="573"/>
        <end position="575"/>
    </location>
</feature>
<comment type="function">
    <text evidence="1 5 7 8 9 10 12 13">Auxin receptor that mediates Aux/IAA proteins proteasomal degradation and auxin-regulated transcription. The SCF(TIR1) E3 ubiquitin ligase complex is involved in auxin-mediated signaling pathway that regulate root and hypocotyl growth, lateral root formation, cell elongation, and gravitropism. Appears to allow pericycle cells to overcome G2 arrest prior to lateral root development. Plays a role in ethylene signaling in roots. Confers sensitivity to the virulent bacterial pathogen P.syringae.</text>
</comment>
<comment type="pathway">
    <text>Protein modification; protein ubiquitination.</text>
</comment>
<comment type="subunit">
    <text evidence="1 2 3 4 6 7 8 9 11 12">Interacts with auxin. Part of a SCF E3 ubiquitin ligase complex SCF(TIR1) composed of SKP1, CUL1, RBX1 and TIR1. SCF(TIR1) interacts with the COP9 signalosome (CSN) complex. Interacts with Aux/IAA proteins (IAA3, IAA7, IAA12 and IAA17) in an auxin-dependent manner. The interaction with IAA3, a negative regulator of auxin responses, is promoted by auxin, but repressed by juglon (5-hydroxy-1,4-naphthoquinone). Interactions with auxin-responsive proteins is inactivated by auxin antagonists.</text>
</comment>
<comment type="interaction">
    <interactant intactId="EBI-307183">
        <id>Q570C0</id>
    </interactant>
    <interactant intactId="EBI-25530262">
        <id>Q9SU81</id>
        <label>At4g29700</label>
    </interactant>
    <organismsDiffer>false</organismsDiffer>
    <experiments>3</experiments>
</comment>
<comment type="interaction">
    <interactant intactId="EBI-307183">
        <id>Q570C0</id>
    </interactant>
    <interactant intactId="EBI-632243">
        <id>P93830</id>
        <label>IAA17</label>
    </interactant>
    <organismsDiffer>false</organismsDiffer>
    <experiments>2</experiments>
</comment>
<comment type="interaction">
    <interactant intactId="EBI-307183">
        <id>Q570C0</id>
    </interactant>
    <interactant intactId="EBI-307174">
        <id>Q38822</id>
        <label>IAA3</label>
    </interactant>
    <organismsDiffer>false</organismsDiffer>
    <experiments>3</experiments>
</comment>
<comment type="interaction">
    <interactant intactId="EBI-307183">
        <id>Q570C0</id>
    </interactant>
    <interactant intactId="EBI-602959">
        <id>Q38825</id>
        <label>IAA7</label>
    </interactant>
    <organismsDiffer>false</organismsDiffer>
    <experiments>8</experiments>
</comment>
<comment type="interaction">
    <interactant intactId="EBI-307183">
        <id>Q570C0</id>
    </interactant>
    <interactant intactId="EBI-532357">
        <id>Q39255</id>
        <label>SKP1A</label>
    </interactant>
    <organismsDiffer>false</organismsDiffer>
    <experiments>11</experiments>
</comment>
<comment type="interaction">
    <interactant intactId="EBI-307183">
        <id>Q570C0</id>
    </interactant>
    <interactant intactId="EBI-604076">
        <id>Q9FHW7</id>
        <label>SKP1B</label>
    </interactant>
    <organismsDiffer>false</organismsDiffer>
    <experiments>7</experiments>
</comment>
<comment type="interaction">
    <interactant intactId="EBI-307183">
        <id>Q570C0</id>
    </interactant>
    <interactant intactId="EBI-4424563">
        <id>Q93Z00</id>
        <label>TCP14</label>
    </interactant>
    <organismsDiffer>false</organismsDiffer>
    <experiments>3</experiments>
</comment>
<comment type="interaction">
    <interactant intactId="EBI-307183">
        <id>Q570C0</id>
    </interactant>
    <interactant intactId="EBI-15192297">
        <id>Q9LQF0</id>
        <label>TCP23</label>
    </interactant>
    <organismsDiffer>false</organismsDiffer>
    <experiments>3</experiments>
</comment>
<comment type="subcellular location">
    <subcellularLocation>
        <location evidence="9">Nucleus</location>
    </subcellularLocation>
</comment>
<comment type="tissue specificity">
    <text evidence="1 13">Expressed in roots, stems, leaves and flowers. In adult plants, mostly expressed in floral stigma, anther filaments, abscission zones and vascular tissues.</text>
</comment>
<comment type="developmental stage">
    <text evidence="1">Abundant expression in developing embryos. In young seedlings, expressed in root apical meristem, and expanding cotyledons and hypocotyls. In older seedlings, still expressed in root apical meristems, but also in lateral root primordia, stipules, shoot apical meristem and vascular tissues.</text>
</comment>
<comment type="induction">
    <text evidence="10">Repressed by miR393a (microRNA) in response to flg-22 (flagellin-derived peptide 22).</text>
</comment>
<comment type="domain">
    <text evidence="1">The F-box is necessary for the interaction with SKP1.</text>
</comment>
<comment type="disruption phenotype">
    <text evidence="13">Plant are deficient in a variety of auxin-regulated growth processes including lateral root formation, and hypocotyl and cell elongation.</text>
</comment>
<comment type="miscellaneous">
    <text>The myo-inositol hexakisphosphate acts as a structural cofactor.</text>
</comment>
<comment type="sequence caution" evidence="14">
    <conflict type="erroneous initiation">
        <sequence resource="EMBL-CDS" id="BAD94031"/>
    </conflict>
</comment>
<protein>
    <recommendedName>
        <fullName>Protein TRANSPORT INHIBITOR RESPONSE 1</fullName>
    </recommendedName>
    <alternativeName>
        <fullName>Weak ethylene-insensitive protein 1</fullName>
    </alternativeName>
</protein>
<reference key="1">
    <citation type="journal article" date="1998" name="Genes Dev.">
        <title>The TIR1 protein of Arabidopsis functions in auxin response and is related to human SKP2 and yeast grr1p.</title>
        <authorList>
            <person name="Ruegger M."/>
            <person name="Dewey E."/>
            <person name="Gray W.M."/>
            <person name="Hobbie L."/>
            <person name="Turner J."/>
            <person name="Estelle M."/>
        </authorList>
    </citation>
    <scope>NUCLEOTIDE SEQUENCE [GENOMIC DNA / MRNA]</scope>
    <scope>FUNCTION</scope>
    <scope>DISRUPTION PHENOTYPE</scope>
    <scope>TISSUE SPECIFICITY</scope>
    <scope>MUTAGENESIS OF GLY-147 AND GLY-441</scope>
</reference>
<reference key="2">
    <citation type="journal article" date="2000" name="Nature">
        <title>Sequence and analysis of chromosome 3 of the plant Arabidopsis thaliana.</title>
        <authorList>
            <person name="Salanoubat M."/>
            <person name="Lemcke K."/>
            <person name="Rieger M."/>
            <person name="Ansorge W."/>
            <person name="Unseld M."/>
            <person name="Fartmann B."/>
            <person name="Valle G."/>
            <person name="Bloecker H."/>
            <person name="Perez-Alonso M."/>
            <person name="Obermaier B."/>
            <person name="Delseny M."/>
            <person name="Boutry M."/>
            <person name="Grivell L.A."/>
            <person name="Mache R."/>
            <person name="Puigdomenech P."/>
            <person name="De Simone V."/>
            <person name="Choisne N."/>
            <person name="Artiguenave F."/>
            <person name="Robert C."/>
            <person name="Brottier P."/>
            <person name="Wincker P."/>
            <person name="Cattolico L."/>
            <person name="Weissenbach J."/>
            <person name="Saurin W."/>
            <person name="Quetier F."/>
            <person name="Schaefer M."/>
            <person name="Mueller-Auer S."/>
            <person name="Gabel C."/>
            <person name="Fuchs M."/>
            <person name="Benes V."/>
            <person name="Wurmbach E."/>
            <person name="Drzonek H."/>
            <person name="Erfle H."/>
            <person name="Jordan N."/>
            <person name="Bangert S."/>
            <person name="Wiedelmann R."/>
            <person name="Kranz H."/>
            <person name="Voss H."/>
            <person name="Holland R."/>
            <person name="Brandt P."/>
            <person name="Nyakatura G."/>
            <person name="Vezzi A."/>
            <person name="D'Angelo M."/>
            <person name="Pallavicini A."/>
            <person name="Toppo S."/>
            <person name="Simionati B."/>
            <person name="Conrad A."/>
            <person name="Hornischer K."/>
            <person name="Kauer G."/>
            <person name="Loehnert T.-H."/>
            <person name="Nordsiek G."/>
            <person name="Reichelt J."/>
            <person name="Scharfe M."/>
            <person name="Schoen O."/>
            <person name="Bargues M."/>
            <person name="Terol J."/>
            <person name="Climent J."/>
            <person name="Navarro P."/>
            <person name="Collado C."/>
            <person name="Perez-Perez A."/>
            <person name="Ottenwaelder B."/>
            <person name="Duchemin D."/>
            <person name="Cooke R."/>
            <person name="Laudie M."/>
            <person name="Berger-Llauro C."/>
            <person name="Purnelle B."/>
            <person name="Masuy D."/>
            <person name="de Haan M."/>
            <person name="Maarse A.C."/>
            <person name="Alcaraz J.-P."/>
            <person name="Cottet A."/>
            <person name="Casacuberta E."/>
            <person name="Monfort A."/>
            <person name="Argiriou A."/>
            <person name="Flores M."/>
            <person name="Liguori R."/>
            <person name="Vitale D."/>
            <person name="Mannhaupt G."/>
            <person name="Haase D."/>
            <person name="Schoof H."/>
            <person name="Rudd S."/>
            <person name="Zaccaria P."/>
            <person name="Mewes H.-W."/>
            <person name="Mayer K.F.X."/>
            <person name="Kaul S."/>
            <person name="Town C.D."/>
            <person name="Koo H.L."/>
            <person name="Tallon L.J."/>
            <person name="Jenkins J."/>
            <person name="Rooney T."/>
            <person name="Rizzo M."/>
            <person name="Walts A."/>
            <person name="Utterback T."/>
            <person name="Fujii C.Y."/>
            <person name="Shea T.P."/>
            <person name="Creasy T.H."/>
            <person name="Haas B."/>
            <person name="Maiti R."/>
            <person name="Wu D."/>
            <person name="Peterson J."/>
            <person name="Van Aken S."/>
            <person name="Pai G."/>
            <person name="Militscher J."/>
            <person name="Sellers P."/>
            <person name="Gill J.E."/>
            <person name="Feldblyum T.V."/>
            <person name="Preuss D."/>
            <person name="Lin X."/>
            <person name="Nierman W.C."/>
            <person name="Salzberg S.L."/>
            <person name="White O."/>
            <person name="Venter J.C."/>
            <person name="Fraser C.M."/>
            <person name="Kaneko T."/>
            <person name="Nakamura Y."/>
            <person name="Sato S."/>
            <person name="Kato T."/>
            <person name="Asamizu E."/>
            <person name="Sasamoto S."/>
            <person name="Kimura T."/>
            <person name="Idesawa K."/>
            <person name="Kawashima K."/>
            <person name="Kishida Y."/>
            <person name="Kiyokawa C."/>
            <person name="Kohara M."/>
            <person name="Matsumoto M."/>
            <person name="Matsuno A."/>
            <person name="Muraki A."/>
            <person name="Nakayama S."/>
            <person name="Nakazaki N."/>
            <person name="Shinpo S."/>
            <person name="Takeuchi C."/>
            <person name="Wada T."/>
            <person name="Watanabe A."/>
            <person name="Yamada M."/>
            <person name="Yasuda M."/>
            <person name="Tabata S."/>
        </authorList>
    </citation>
    <scope>NUCLEOTIDE SEQUENCE [LARGE SCALE GENOMIC DNA]</scope>
    <source>
        <strain>cv. Columbia</strain>
    </source>
</reference>
<reference key="3">
    <citation type="journal article" date="2017" name="Plant J.">
        <title>Araport11: a complete reannotation of the Arabidopsis thaliana reference genome.</title>
        <authorList>
            <person name="Cheng C.Y."/>
            <person name="Krishnakumar V."/>
            <person name="Chan A.P."/>
            <person name="Thibaud-Nissen F."/>
            <person name="Schobel S."/>
            <person name="Town C.D."/>
        </authorList>
    </citation>
    <scope>GENOME REANNOTATION</scope>
    <source>
        <strain>cv. Columbia</strain>
    </source>
</reference>
<reference key="4">
    <citation type="journal article" date="2003" name="Science">
        <title>Empirical analysis of transcriptional activity in the Arabidopsis genome.</title>
        <authorList>
            <person name="Yamada K."/>
            <person name="Lim J."/>
            <person name="Dale J.M."/>
            <person name="Chen H."/>
            <person name="Shinn P."/>
            <person name="Palm C.J."/>
            <person name="Southwick A.M."/>
            <person name="Wu H.C."/>
            <person name="Kim C.J."/>
            <person name="Nguyen M."/>
            <person name="Pham P.K."/>
            <person name="Cheuk R.F."/>
            <person name="Karlin-Newmann G."/>
            <person name="Liu S.X."/>
            <person name="Lam B."/>
            <person name="Sakano H."/>
            <person name="Wu T."/>
            <person name="Yu G."/>
            <person name="Miranda M."/>
            <person name="Quach H.L."/>
            <person name="Tripp M."/>
            <person name="Chang C.H."/>
            <person name="Lee J.M."/>
            <person name="Toriumi M.J."/>
            <person name="Chan M.M."/>
            <person name="Tang C.C."/>
            <person name="Onodera C.S."/>
            <person name="Deng J.M."/>
            <person name="Akiyama K."/>
            <person name="Ansari Y."/>
            <person name="Arakawa T."/>
            <person name="Banh J."/>
            <person name="Banno F."/>
            <person name="Bowser L."/>
            <person name="Brooks S.Y."/>
            <person name="Carninci P."/>
            <person name="Chao Q."/>
            <person name="Choy N."/>
            <person name="Enju A."/>
            <person name="Goldsmith A.D."/>
            <person name="Gurjal M."/>
            <person name="Hansen N.F."/>
            <person name="Hayashizaki Y."/>
            <person name="Johnson-Hopson C."/>
            <person name="Hsuan V.W."/>
            <person name="Iida K."/>
            <person name="Karnes M."/>
            <person name="Khan S."/>
            <person name="Koesema E."/>
            <person name="Ishida J."/>
            <person name="Jiang P.X."/>
            <person name="Jones T."/>
            <person name="Kawai J."/>
            <person name="Kamiya A."/>
            <person name="Meyers C."/>
            <person name="Nakajima M."/>
            <person name="Narusaka M."/>
            <person name="Seki M."/>
            <person name="Sakurai T."/>
            <person name="Satou M."/>
            <person name="Tamse R."/>
            <person name="Vaysberg M."/>
            <person name="Wallender E.K."/>
            <person name="Wong C."/>
            <person name="Yamamura Y."/>
            <person name="Yuan S."/>
            <person name="Shinozaki K."/>
            <person name="Davis R.W."/>
            <person name="Theologis A."/>
            <person name="Ecker J.R."/>
        </authorList>
    </citation>
    <scope>NUCLEOTIDE SEQUENCE [LARGE SCALE MRNA]</scope>
    <source>
        <strain>cv. Columbia</strain>
    </source>
</reference>
<reference key="5">
    <citation type="journal article" date="2007" name="Genetics">
        <title>The genetic architecture of shoot branching in Arabidopsis thaliana: a comparative assessment of candidate gene associations vs. quantitative trait locus mapping.</title>
        <authorList>
            <person name="Ehrenreich I.M."/>
            <person name="Stafford P.A."/>
            <person name="Purugganan M.D."/>
        </authorList>
    </citation>
    <scope>NUCLEOTIDE SEQUENCE [GENOMIC DNA] OF 172-380</scope>
    <source>
        <strain>cv. Ag-0</strain>
        <strain>cv. An-1</strain>
        <strain>cv. Br-0</strain>
        <strain>cv. C24</strain>
        <strain>cv. Ct-1</strain>
        <strain>cv. Cvi-1</strain>
        <strain>cv. Edi-0</strain>
        <strain>cv. Ga-0</strain>
        <strain>cv. Kas-2</strain>
        <strain>cv. Kin-0</strain>
        <strain>cv. Landsberg erecta</strain>
        <strain>cv. Ll-0</strain>
        <strain>cv. Lz-0</strain>
        <strain>cv. Ms-0</strain>
        <strain>cv. Mt-0</strain>
        <strain>cv. Nd-1</strain>
        <strain>cv. Nok-3</strain>
        <strain>cv. Oy-0</strain>
        <strain>cv. Se-0</strain>
        <strain>cv. Sorbo</strain>
        <strain>cv. Tsu-1</strain>
        <strain>cv. Van-0</strain>
        <strain>cv. Wa-1</strain>
        <strain>cv. Wassilewskija</strain>
    </source>
</reference>
<reference key="6">
    <citation type="submission" date="2005-03" db="EMBL/GenBank/DDBJ databases">
        <title>Large-scale analysis of RIKEN Arabidopsis full-length (RAFL) cDNAs.</title>
        <authorList>
            <person name="Totoki Y."/>
            <person name="Seki M."/>
            <person name="Ishida J."/>
            <person name="Nakajima M."/>
            <person name="Enju A."/>
            <person name="Kamiya A."/>
            <person name="Narusaka M."/>
            <person name="Shin-i T."/>
            <person name="Nakagawa M."/>
            <person name="Sakamoto N."/>
            <person name="Oishi K."/>
            <person name="Kohara Y."/>
            <person name="Kobayashi M."/>
            <person name="Toyoda A."/>
            <person name="Sakaki Y."/>
            <person name="Sakurai T."/>
            <person name="Iida K."/>
            <person name="Akiyama K."/>
            <person name="Satou M."/>
            <person name="Toyoda T."/>
            <person name="Konagaya A."/>
            <person name="Carninci P."/>
            <person name="Kawai J."/>
            <person name="Hayashizaki Y."/>
            <person name="Shinozaki K."/>
        </authorList>
    </citation>
    <scope>NUCLEOTIDE SEQUENCE [LARGE SCALE MRNA] OF 359-594</scope>
    <source>
        <strain>cv. Columbia</strain>
    </source>
</reference>
<reference key="7">
    <citation type="journal article" date="2008" name="Plant Physiol.">
        <title>Sequence variation of microRNAs and their binding sites in Arabidopsis.</title>
        <authorList>
            <person name="Ehrenreich I.M."/>
            <person name="Purugganan M.D."/>
        </authorList>
    </citation>
    <scope>NUCLEOTIDE SEQUENCE [GENOMIC DNA] OF 429-579</scope>
    <source>
        <strain>cv. Ag-0</strain>
        <strain>cv. An-1</strain>
        <strain>cv. Bay-0</strain>
        <strain>cv. Br-0</strain>
        <strain>cv. C24</strain>
        <strain>cv. Ct-1</strain>
        <strain>cv. Cvi-0</strain>
        <strain>cv. Edi-0</strain>
        <strain>cv. Ei-2</strain>
        <strain>cv. Ga-0</strain>
        <strain>cv. Gy-0</strain>
        <strain>cv. Kas-2</strain>
        <strain>cv. Ll-0</strain>
        <strain>cv. Mrk-0</strain>
        <strain>cv. Ms-0</strain>
        <strain>cv. Mt-0</strain>
        <strain>cv. Nd-1</strain>
        <strain>cv. Nok-3</strain>
        <strain>cv. Oy-0</strain>
        <strain>cv. Sorbo</strain>
        <strain>cv. Wa-1</strain>
        <strain>cv. Wassilewskija</strain>
        <strain>cv. Wei-0</strain>
        <strain>cv. Wt-5</strain>
    </source>
</reference>
<reference key="8">
    <citation type="journal article" date="1999" name="Genes Dev.">
        <title>Identification of an SCF ubiquitin-ligase complex required for auxin response in Arabidopsis thaliana.</title>
        <authorList>
            <person name="Gray W.M."/>
            <person name="del Pozo J.C."/>
            <person name="Walker L."/>
            <person name="Hobbie L."/>
            <person name="Risseeuw E."/>
            <person name="Banks T."/>
            <person name="Crosby W.L."/>
            <person name="Yang M."/>
            <person name="Ma H."/>
            <person name="Estelle M."/>
        </authorList>
    </citation>
    <scope>FUNCTION</scope>
    <scope>TISSUE SPECIFICITY</scope>
    <scope>DEVELOPMENTAL STAGE</scope>
    <scope>INTERACTION WITH SKP1A; SKP1B AND CUL1</scope>
    <scope>DOMAIN</scope>
    <scope>MUTAGENESIS OF PRO-10</scope>
</reference>
<reference key="9">
    <citation type="journal article" date="2000" name="Trends Plant Sci.">
        <title>F-box proteins in Arabidopsis.</title>
        <authorList>
            <person name="Xiao W."/>
            <person name="Jang J.-C."/>
        </authorList>
    </citation>
    <scope>GENE FAMILY</scope>
    <scope>NOMENCLATURE</scope>
</reference>
<reference key="10">
    <citation type="journal article" date="2001" name="Nature">
        <title>Auxin regulates SCF(TIR1)-dependent degradation of AUX/IAA proteins.</title>
        <authorList>
            <person name="Gray W.M."/>
            <person name="Kepinski S."/>
            <person name="Rouse D."/>
            <person name="Leyser O."/>
            <person name="Estelle M."/>
        </authorList>
    </citation>
    <scope>INTERACTION WITH IAA7 AND IAA17</scope>
</reference>
<reference key="11">
    <citation type="journal article" date="2001" name="Science">
        <title>Interactions of the COP9 signalosome with the E3 ubiquitin ligase SCF(TIR1) in mediating auxin response.</title>
        <authorList>
            <person name="Schwechheimer C."/>
            <person name="Serino G."/>
            <person name="Callis J."/>
            <person name="Crosby W.L."/>
            <person name="Lyapina S."/>
            <person name="Deshaies R.J."/>
            <person name="Gray W.M."/>
            <person name="Estelle M."/>
            <person name="Deng X.-W."/>
        </authorList>
    </citation>
    <scope>INTERACTION WITH THE CSN COMPLEX</scope>
</reference>
<reference key="12">
    <citation type="journal article" date="2002" name="Plant Cell">
        <title>Role of the Arabidopsis RING-H2 protein RBX1 in RUB modification and SCF function.</title>
        <authorList>
            <person name="Gray W.M."/>
            <person name="Hellmann H."/>
            <person name="Dharmasiri S."/>
            <person name="Estelle M."/>
        </authorList>
    </citation>
    <scope>INTERACTION WITH RBX1</scope>
</reference>
<reference key="13">
    <citation type="journal article" date="2003" name="Plant J.">
        <title>Regulation of Arabidopsis SHY2/IAA3 protein turnover.</title>
        <authorList>
            <person name="Tian Q."/>
            <person name="Nagpal P."/>
            <person name="Reed J.W."/>
        </authorList>
    </citation>
    <scope>INTERACTION WITH IAA3</scope>
</reference>
<reference key="14">
    <citation type="journal article" date="2003" name="Proc. Natl. Acad. Sci. U.S.A.">
        <title>Five components of the ethylene-response pathway identified in a screen for weak ethylene-insensitive mutants in Arabidopsis.</title>
        <authorList>
            <person name="Alonso J.M."/>
            <person name="Stepanova A.N."/>
            <person name="Solano R."/>
            <person name="Wisman E."/>
            <person name="Ferrari S."/>
            <person name="Ausubel F.M."/>
            <person name="Ecker J.R."/>
        </authorList>
    </citation>
    <scope>FUNCTION</scope>
    <scope>MUTAGENESIS OF 574-TRP--LEU-594</scope>
</reference>
<reference key="15">
    <citation type="journal article" date="2005" name="Dev. Cell">
        <title>Plant development is regulated by a family of auxin receptor F box proteins.</title>
        <authorList>
            <person name="Dharmasiri N."/>
            <person name="Dharmasiri S."/>
            <person name="Weijers D."/>
            <person name="Lechner E."/>
            <person name="Yamada M."/>
            <person name="Hobbie L."/>
            <person name="Ehrismann J.S."/>
            <person name="Juergens G."/>
            <person name="Estelle M."/>
        </authorList>
    </citation>
    <scope>FUNCTION</scope>
    <scope>SUBCELLULAR LOCATION</scope>
    <scope>INTERACTION WITH IAA12; IAA7 AND SKP1A/ASK1</scope>
</reference>
<reference key="16">
    <citation type="journal article" date="2005" name="Nature">
        <title>The F-box protein TIR1 is an auxin receptor.</title>
        <authorList>
            <person name="Dharmasiri N."/>
            <person name="Dharmasiri S."/>
            <person name="Estelle M."/>
        </authorList>
    </citation>
    <scope>FUNCTION</scope>
    <scope>INTERACTION WITH AUX/IAA PROTEINS AND AUXIN</scope>
</reference>
<reference key="17">
    <citation type="journal article" date="2005" name="Nature">
        <title>The Arabidopsis F-box protein TIR1 is an auxin receptor.</title>
        <authorList>
            <person name="Kepinski S."/>
            <person name="Leyser O."/>
        </authorList>
    </citation>
    <scope>FUNCTION</scope>
    <scope>INTERACTION WITH AUX/IAA PROTEINS AND AUXIN</scope>
    <scope>MUTAGENESIS OF PRO-10; VAL-33 AND LYS-35</scope>
</reference>
<reference key="18">
    <citation type="journal article" date="2006" name="Science">
        <title>A plant miRNA contributes to antibacterial resistance by repressing auxin signaling.</title>
        <authorList>
            <person name="Navarro L."/>
            <person name="Dunoyer P."/>
            <person name="Jay F."/>
            <person name="Arnold B."/>
            <person name="Dharmasiri N."/>
            <person name="Estelle M."/>
            <person name="Voinnet O."/>
            <person name="Jones J.D.G."/>
        </authorList>
    </citation>
    <scope>FUNCTION</scope>
    <scope>INDUCTION</scope>
</reference>
<reference evidence="15 16 17 18 19" key="19">
    <citation type="journal article" date="2007" name="Nature">
        <title>Mechanism of auxin perception by the TIR1 ubiquitin ligase.</title>
        <authorList>
            <person name="Tan X."/>
            <person name="Calderon-Villalobos L.I.A."/>
            <person name="Sharon M."/>
            <person name="Zheng C."/>
            <person name="Robinson C.V."/>
            <person name="Estelle M."/>
            <person name="Zheng N."/>
        </authorList>
    </citation>
    <scope>X-RAY CRYSTALLOGRAPHY (1.8 ANGSTROMS) IN COMPLEXES WITH SKP1A; NATURAL AUXIN INDOLE-3-ACETATE; SYNTHETIC AUXIN ANALOGS 1-NAPHTHALENE ACETATE AND 2,4-DICHLOROPHENOXYACETATE; AUX/IAA POLYPEPTIDE SUBSTRATE AND MYO-INOSITOL HEXAKISPHOSPHATE</scope>
</reference>
<reference key="20">
    <citation type="journal article" date="2008" name="Proc. Natl. Acad. Sci. U.S.A.">
        <title>Small-molecule agonists and antagonists of F-box protein-substrate interactions in auxin perception and signaling.</title>
        <authorList>
            <person name="Hayashi K."/>
            <person name="Tan X."/>
            <person name="Zheng N."/>
            <person name="Hatate T."/>
            <person name="Kimura Y."/>
            <person name="Kepinski S."/>
            <person name="Nozaki H."/>
        </authorList>
    </citation>
    <scope>X-RAY CRYSTALLOGRAPHY (2.6 ANGSTROMS) IN COMPLEX WITH SKP1A; AUX/IAA POLYPEPTIDE; AUXIN; AUXIN AGONISTS; AUXIN ANTAGONISTS AND MYO-INOSITOL HEXAKISPHOSPHATE</scope>
    <scope>FUNCTION</scope>
</reference>
<keyword id="KW-0002">3D-structure</keyword>
<keyword id="KW-0927">Auxin signaling pathway</keyword>
<keyword id="KW-0131">Cell cycle</keyword>
<keyword id="KW-0217">Developmental protein</keyword>
<keyword id="KW-0936">Ethylene signaling pathway</keyword>
<keyword id="KW-0539">Nucleus</keyword>
<keyword id="KW-0611">Plant defense</keyword>
<keyword id="KW-1185">Reference proteome</keyword>
<keyword id="KW-0833">Ubl conjugation pathway</keyword>
<organism>
    <name type="scientific">Arabidopsis thaliana</name>
    <name type="common">Mouse-ear cress</name>
    <dbReference type="NCBI Taxonomy" id="3702"/>
    <lineage>
        <taxon>Eukaryota</taxon>
        <taxon>Viridiplantae</taxon>
        <taxon>Streptophyta</taxon>
        <taxon>Embryophyta</taxon>
        <taxon>Tracheophyta</taxon>
        <taxon>Spermatophyta</taxon>
        <taxon>Magnoliopsida</taxon>
        <taxon>eudicotyledons</taxon>
        <taxon>Gunneridae</taxon>
        <taxon>Pentapetalae</taxon>
        <taxon>rosids</taxon>
        <taxon>malvids</taxon>
        <taxon>Brassicales</taxon>
        <taxon>Brassicaceae</taxon>
        <taxon>Camelineae</taxon>
        <taxon>Arabidopsis</taxon>
    </lineage>
</organism>
<proteinExistence type="evidence at protein level"/>
<name>TIR1_ARATH</name>